<gene>
    <name evidence="14" type="primary">NUDT3</name>
    <name type="synonym">DIPP</name>
    <name type="synonym">DIPP1</name>
</gene>
<keyword id="KW-0002">3D-structure</keyword>
<keyword id="KW-0007">Acetylation</keyword>
<keyword id="KW-0963">Cytoplasm</keyword>
<keyword id="KW-0378">Hydrolase</keyword>
<keyword id="KW-0460">Magnesium</keyword>
<keyword id="KW-0464">Manganese</keyword>
<keyword id="KW-0479">Metal-binding</keyword>
<keyword id="KW-0539">Nucleus</keyword>
<keyword id="KW-1267">Proteomics identification</keyword>
<keyword id="KW-1185">Reference proteome</keyword>
<keyword id="KW-0862">Zinc</keyword>
<dbReference type="EC" id="3.6.1.52" evidence="5 6 10 11"/>
<dbReference type="EC" id="3.6.1.61" evidence="4 5 6 10"/>
<dbReference type="EC" id="3.6.1.10" evidence="10"/>
<dbReference type="EC" id="3.6.1.62" evidence="10"/>
<dbReference type="EC" id="3.6.1.59" evidence="10"/>
<dbReference type="EMBL" id="AF062529">
    <property type="protein sequence ID" value="AAC83224.1"/>
    <property type="molecule type" value="mRNA"/>
</dbReference>
<dbReference type="EMBL" id="AF062530">
    <property type="protein sequence ID" value="AAC83225.1"/>
    <property type="molecule type" value="mRNA"/>
</dbReference>
<dbReference type="EMBL" id="BT019984">
    <property type="protein sequence ID" value="AAV38787.1"/>
    <property type="molecule type" value="mRNA"/>
</dbReference>
<dbReference type="EMBL" id="BT019985">
    <property type="protein sequence ID" value="AAV38788.1"/>
    <property type="molecule type" value="mRNA"/>
</dbReference>
<dbReference type="EMBL" id="AK313440">
    <property type="protein sequence ID" value="BAG36231.1"/>
    <property type="molecule type" value="mRNA"/>
</dbReference>
<dbReference type="EMBL" id="Z98036">
    <property type="status" value="NOT_ANNOTATED_CDS"/>
    <property type="molecule type" value="Genomic_DNA"/>
</dbReference>
<dbReference type="EMBL" id="AL355855">
    <property type="status" value="NOT_ANNOTATED_CDS"/>
    <property type="molecule type" value="Genomic_DNA"/>
</dbReference>
<dbReference type="EMBL" id="CH471081">
    <property type="protein sequence ID" value="EAX03781.1"/>
    <property type="molecule type" value="Genomic_DNA"/>
</dbReference>
<dbReference type="EMBL" id="BC007727">
    <property type="protein sequence ID" value="AAH07727.1"/>
    <property type="molecule type" value="mRNA"/>
</dbReference>
<dbReference type="CCDS" id="CCDS4791.1"/>
<dbReference type="RefSeq" id="NP_006694.1">
    <property type="nucleotide sequence ID" value="NM_006703.4"/>
</dbReference>
<dbReference type="PDB" id="2FVV">
    <property type="method" value="X-ray"/>
    <property type="resolution" value="1.25 A"/>
    <property type="chains" value="A=1-172"/>
</dbReference>
<dbReference type="PDB" id="2Q9P">
    <property type="method" value="X-ray"/>
    <property type="resolution" value="1.65 A"/>
    <property type="chains" value="A=1-172"/>
</dbReference>
<dbReference type="PDB" id="6PCK">
    <property type="method" value="X-ray"/>
    <property type="resolution" value="1.20 A"/>
    <property type="chains" value="A=1-148"/>
</dbReference>
<dbReference type="PDB" id="6PCL">
    <property type="method" value="X-ray"/>
    <property type="resolution" value="1.30 A"/>
    <property type="chains" value="A=1-148"/>
</dbReference>
<dbReference type="PDB" id="6WO7">
    <property type="method" value="X-ray"/>
    <property type="resolution" value="1.40 A"/>
    <property type="chains" value="A=1-148"/>
</dbReference>
<dbReference type="PDB" id="6WO8">
    <property type="method" value="X-ray"/>
    <property type="resolution" value="1.70 A"/>
    <property type="chains" value="A=1-148"/>
</dbReference>
<dbReference type="PDB" id="6WO9">
    <property type="method" value="X-ray"/>
    <property type="resolution" value="2.00 A"/>
    <property type="chains" value="A=1-148"/>
</dbReference>
<dbReference type="PDB" id="6WOA">
    <property type="method" value="X-ray"/>
    <property type="resolution" value="1.50 A"/>
    <property type="chains" value="A=1-148"/>
</dbReference>
<dbReference type="PDB" id="6WOB">
    <property type="method" value="X-ray"/>
    <property type="resolution" value="1.45 A"/>
    <property type="chains" value="A=1-148"/>
</dbReference>
<dbReference type="PDB" id="6WOC">
    <property type="method" value="X-ray"/>
    <property type="resolution" value="1.35 A"/>
    <property type="chains" value="A=1-148"/>
</dbReference>
<dbReference type="PDB" id="6WOD">
    <property type="method" value="X-ray"/>
    <property type="resolution" value="1.35 A"/>
    <property type="chains" value="A=1-148"/>
</dbReference>
<dbReference type="PDB" id="6WOE">
    <property type="method" value="X-ray"/>
    <property type="resolution" value="1.40 A"/>
    <property type="chains" value="A=1-148"/>
</dbReference>
<dbReference type="PDB" id="6WOF">
    <property type="method" value="X-ray"/>
    <property type="resolution" value="1.60 A"/>
    <property type="chains" value="A=1-148"/>
</dbReference>
<dbReference type="PDB" id="6WOG">
    <property type="method" value="X-ray"/>
    <property type="resolution" value="1.50 A"/>
    <property type="chains" value="A=1-148"/>
</dbReference>
<dbReference type="PDB" id="6WOH">
    <property type="method" value="X-ray"/>
    <property type="resolution" value="1.70 A"/>
    <property type="chains" value="A=1-148"/>
</dbReference>
<dbReference type="PDB" id="6WOI">
    <property type="method" value="X-ray"/>
    <property type="resolution" value="1.50 A"/>
    <property type="chains" value="A=1-148"/>
</dbReference>
<dbReference type="PDB" id="7TN4">
    <property type="method" value="X-ray"/>
    <property type="resolution" value="1.85 A"/>
    <property type="chains" value="A=1-172"/>
</dbReference>
<dbReference type="PDB" id="8G9C">
    <property type="method" value="X-ray"/>
    <property type="resolution" value="1.40 A"/>
    <property type="chains" value="A=1-172"/>
</dbReference>
<dbReference type="PDB" id="8G9D">
    <property type="method" value="X-ray"/>
    <property type="resolution" value="1.60 A"/>
    <property type="chains" value="A=1-172"/>
</dbReference>
<dbReference type="PDB" id="8T98">
    <property type="method" value="X-ray"/>
    <property type="resolution" value="1.30 A"/>
    <property type="chains" value="A=1-148"/>
</dbReference>
<dbReference type="PDB" id="8T99">
    <property type="method" value="X-ray"/>
    <property type="resolution" value="1.50 A"/>
    <property type="chains" value="A=1-148"/>
</dbReference>
<dbReference type="PDB" id="8TF9">
    <property type="method" value="X-ray"/>
    <property type="resolution" value="1.55 A"/>
    <property type="chains" value="A=1-148"/>
</dbReference>
<dbReference type="PDB" id="8TFA">
    <property type="method" value="X-ray"/>
    <property type="resolution" value="1.40 A"/>
    <property type="chains" value="A=1-148"/>
</dbReference>
<dbReference type="PDBsum" id="2FVV"/>
<dbReference type="PDBsum" id="2Q9P"/>
<dbReference type="PDBsum" id="6PCK"/>
<dbReference type="PDBsum" id="6PCL"/>
<dbReference type="PDBsum" id="6WO7"/>
<dbReference type="PDBsum" id="6WO8"/>
<dbReference type="PDBsum" id="6WO9"/>
<dbReference type="PDBsum" id="6WOA"/>
<dbReference type="PDBsum" id="6WOB"/>
<dbReference type="PDBsum" id="6WOC"/>
<dbReference type="PDBsum" id="6WOD"/>
<dbReference type="PDBsum" id="6WOE"/>
<dbReference type="PDBsum" id="6WOF"/>
<dbReference type="PDBsum" id="6WOG"/>
<dbReference type="PDBsum" id="6WOH"/>
<dbReference type="PDBsum" id="6WOI"/>
<dbReference type="PDBsum" id="7TN4"/>
<dbReference type="PDBsum" id="8G9C"/>
<dbReference type="PDBsum" id="8G9D"/>
<dbReference type="PDBsum" id="8T98"/>
<dbReference type="PDBsum" id="8T99"/>
<dbReference type="PDBsum" id="8TF9"/>
<dbReference type="PDBsum" id="8TFA"/>
<dbReference type="SMR" id="O95989"/>
<dbReference type="BioGRID" id="116336">
    <property type="interactions" value="101"/>
</dbReference>
<dbReference type="FunCoup" id="O95989">
    <property type="interactions" value="3452"/>
</dbReference>
<dbReference type="IntAct" id="O95989">
    <property type="interactions" value="84"/>
</dbReference>
<dbReference type="MINT" id="O95989"/>
<dbReference type="STRING" id="9606.ENSP00000476119"/>
<dbReference type="ChEMBL" id="CHEMBL4295689"/>
<dbReference type="GlyGen" id="O95989">
    <property type="glycosylation" value="1 site, 1 O-linked glycan (1 site)"/>
</dbReference>
<dbReference type="iPTMnet" id="O95989"/>
<dbReference type="PhosphoSitePlus" id="O95989"/>
<dbReference type="SwissPalm" id="O95989"/>
<dbReference type="BioMuta" id="NUDT3"/>
<dbReference type="jPOST" id="O95989"/>
<dbReference type="MassIVE" id="O95989"/>
<dbReference type="PaxDb" id="9606-ENSP00000476119"/>
<dbReference type="PeptideAtlas" id="O95989"/>
<dbReference type="ProteomicsDB" id="51165"/>
<dbReference type="Pumba" id="O95989"/>
<dbReference type="Antibodypedia" id="69618">
    <property type="antibodies" value="54 antibodies from 20 providers"/>
</dbReference>
<dbReference type="DNASU" id="11165"/>
<dbReference type="Ensembl" id="ENST00000607016.2">
    <property type="protein sequence ID" value="ENSP00000476119.1"/>
    <property type="gene ID" value="ENSG00000272325.2"/>
</dbReference>
<dbReference type="GeneID" id="11165"/>
<dbReference type="KEGG" id="hsa:11165"/>
<dbReference type="MANE-Select" id="ENST00000607016.2">
    <property type="protein sequence ID" value="ENSP00000476119.1"/>
    <property type="RefSeq nucleotide sequence ID" value="NM_006703.4"/>
    <property type="RefSeq protein sequence ID" value="NP_006694.1"/>
</dbReference>
<dbReference type="UCSC" id="uc003ojl.4">
    <property type="organism name" value="human"/>
</dbReference>
<dbReference type="AGR" id="HGNC:8050"/>
<dbReference type="CTD" id="11165"/>
<dbReference type="DisGeNET" id="11165"/>
<dbReference type="GeneCards" id="NUDT3"/>
<dbReference type="HGNC" id="HGNC:8050">
    <property type="gene designation" value="NUDT3"/>
</dbReference>
<dbReference type="HPA" id="ENSG00000272325">
    <property type="expression patterns" value="Low tissue specificity"/>
</dbReference>
<dbReference type="MIM" id="609228">
    <property type="type" value="gene"/>
</dbReference>
<dbReference type="neXtProt" id="NX_O95989"/>
<dbReference type="OpenTargets" id="ENSG00000272325"/>
<dbReference type="PharmGKB" id="PA31834"/>
<dbReference type="VEuPathDB" id="HostDB:ENSG00000272325"/>
<dbReference type="eggNOG" id="KOG2839">
    <property type="taxonomic scope" value="Eukaryota"/>
</dbReference>
<dbReference type="GeneTree" id="ENSGT00940000157882"/>
<dbReference type="HOGENOM" id="CLU_037162_1_0_1"/>
<dbReference type="InParanoid" id="O95989"/>
<dbReference type="OMA" id="WHEDKLN"/>
<dbReference type="OrthoDB" id="2011998at2759"/>
<dbReference type="PAN-GO" id="O95989">
    <property type="GO annotations" value="11 GO annotations based on evolutionary models"/>
</dbReference>
<dbReference type="PhylomeDB" id="O95989"/>
<dbReference type="TreeFam" id="TF106349"/>
<dbReference type="BioCyc" id="MetaCyc:HS03602-MONOMER"/>
<dbReference type="BRENDA" id="3.6.1.17">
    <property type="organism ID" value="2681"/>
</dbReference>
<dbReference type="BRENDA" id="3.6.1.42">
    <property type="organism ID" value="2681"/>
</dbReference>
<dbReference type="BRENDA" id="3.6.1.52">
    <property type="organism ID" value="2681"/>
</dbReference>
<dbReference type="BRENDA" id="3.6.1.60">
    <property type="organism ID" value="2681"/>
</dbReference>
<dbReference type="PathwayCommons" id="O95989"/>
<dbReference type="Reactome" id="R-HSA-1855167">
    <property type="pathway name" value="Synthesis of pyrophosphates in the cytosol"/>
</dbReference>
<dbReference type="SABIO-RK" id="O95989"/>
<dbReference type="SignaLink" id="O95989"/>
<dbReference type="SIGNOR" id="O95989"/>
<dbReference type="BioGRID-ORCS" id="11165">
    <property type="hits" value="11 hits in 1136 CRISPR screens"/>
</dbReference>
<dbReference type="ChiTaRS" id="NUDT3">
    <property type="organism name" value="human"/>
</dbReference>
<dbReference type="EvolutionaryTrace" id="O95989"/>
<dbReference type="GeneWiki" id="NUDT3"/>
<dbReference type="GenomeRNAi" id="11165"/>
<dbReference type="Pharos" id="O95989">
    <property type="development level" value="Tbio"/>
</dbReference>
<dbReference type="PRO" id="PR:O95989"/>
<dbReference type="Proteomes" id="UP000005640">
    <property type="component" value="Chromosome 6"/>
</dbReference>
<dbReference type="RNAct" id="O95989">
    <property type="molecule type" value="protein"/>
</dbReference>
<dbReference type="Bgee" id="ENSG00000272325">
    <property type="expression patterns" value="Expressed in dorsal motor nucleus of vagus nerve and 213 other cell types or tissues"/>
</dbReference>
<dbReference type="GO" id="GO:0005737">
    <property type="term" value="C:cytoplasm"/>
    <property type="evidence" value="ECO:0000314"/>
    <property type="project" value="UniProtKB"/>
</dbReference>
<dbReference type="GO" id="GO:0005829">
    <property type="term" value="C:cytosol"/>
    <property type="evidence" value="ECO:0000314"/>
    <property type="project" value="HPA"/>
</dbReference>
<dbReference type="GO" id="GO:0098978">
    <property type="term" value="C:glutamatergic synapse"/>
    <property type="evidence" value="ECO:0007669"/>
    <property type="project" value="Ensembl"/>
</dbReference>
<dbReference type="GO" id="GO:0005634">
    <property type="term" value="C:nucleus"/>
    <property type="evidence" value="ECO:0000314"/>
    <property type="project" value="UniProtKB"/>
</dbReference>
<dbReference type="GO" id="GO:0140932">
    <property type="term" value="F:5'-(N(7)-methyl 5'-triphosphoguanosine)-[mRNA] diphosphatase activity"/>
    <property type="evidence" value="ECO:0000314"/>
    <property type="project" value="UniProtKB"/>
</dbReference>
<dbReference type="GO" id="GO:0140933">
    <property type="term" value="F:5'-(N(7)-methylguanosine 5'-triphospho)-[mRNA] hydrolase activity"/>
    <property type="evidence" value="ECO:0000314"/>
    <property type="project" value="UniProtKB"/>
</dbReference>
<dbReference type="GO" id="GO:0034431">
    <property type="term" value="F:bis(5'-adenosyl)-hexaphosphatase activity"/>
    <property type="evidence" value="ECO:0000318"/>
    <property type="project" value="GO_Central"/>
</dbReference>
<dbReference type="GO" id="GO:0034432">
    <property type="term" value="F:bis(5'-adenosyl)-pentaphosphatase activity"/>
    <property type="evidence" value="ECO:0000318"/>
    <property type="project" value="GO_Central"/>
</dbReference>
<dbReference type="GO" id="GO:0008486">
    <property type="term" value="F:diphosphoinositol-polyphosphate diphosphatase activity"/>
    <property type="evidence" value="ECO:0000314"/>
    <property type="project" value="UniProtKB"/>
</dbReference>
<dbReference type="GO" id="GO:0000298">
    <property type="term" value="F:endopolyphosphatase activity"/>
    <property type="evidence" value="ECO:0000314"/>
    <property type="project" value="UniProtKB"/>
</dbReference>
<dbReference type="GO" id="GO:0052842">
    <property type="term" value="F:inositol diphosphate pentakisphosphate diphosphatase activity"/>
    <property type="evidence" value="ECO:0000314"/>
    <property type="project" value="UniProtKB"/>
</dbReference>
<dbReference type="GO" id="GO:0052840">
    <property type="term" value="F:inositol diphosphate tetrakisphosphate diphosphatase activity"/>
    <property type="evidence" value="ECO:0000314"/>
    <property type="project" value="UniProtKB"/>
</dbReference>
<dbReference type="GO" id="GO:0052848">
    <property type="term" value="F:inositol-3,5-bisdiphosphate-2,3,4,6-tetrakisphosphate 5-diphosphatase activity"/>
    <property type="evidence" value="ECO:0007669"/>
    <property type="project" value="RHEA"/>
</dbReference>
<dbReference type="GO" id="GO:0052845">
    <property type="term" value="F:inositol-5-diphosphate-1,2,3,4,6-pentakisphosphate diphosphatase activity"/>
    <property type="evidence" value="ECO:0007669"/>
    <property type="project" value="RHEA"/>
</dbReference>
<dbReference type="GO" id="GO:0000287">
    <property type="term" value="F:magnesium ion binding"/>
    <property type="evidence" value="ECO:0000314"/>
    <property type="project" value="UniProtKB"/>
</dbReference>
<dbReference type="GO" id="GO:0030145">
    <property type="term" value="F:manganese ion binding"/>
    <property type="evidence" value="ECO:0000314"/>
    <property type="project" value="UniProtKB"/>
</dbReference>
<dbReference type="GO" id="GO:0008270">
    <property type="term" value="F:zinc ion binding"/>
    <property type="evidence" value="ECO:0000314"/>
    <property type="project" value="UniProtKB"/>
</dbReference>
<dbReference type="GO" id="GO:1901911">
    <property type="term" value="P:adenosine 5'-(hexahydrogen pentaphosphate) catabolic process"/>
    <property type="evidence" value="ECO:0000318"/>
    <property type="project" value="GO_Central"/>
</dbReference>
<dbReference type="GO" id="GO:0007267">
    <property type="term" value="P:cell-cell signaling"/>
    <property type="evidence" value="ECO:0000304"/>
    <property type="project" value="ProtInc"/>
</dbReference>
<dbReference type="GO" id="GO:1901909">
    <property type="term" value="P:diadenosine hexaphosphate catabolic process"/>
    <property type="evidence" value="ECO:0000314"/>
    <property type="project" value="UniProtKB"/>
</dbReference>
<dbReference type="GO" id="GO:1901907">
    <property type="term" value="P:diadenosine pentaphosphate catabolic process"/>
    <property type="evidence" value="ECO:0000318"/>
    <property type="project" value="GO_Central"/>
</dbReference>
<dbReference type="GO" id="GO:0015961">
    <property type="term" value="P:diadenosine polyphosphate catabolic process"/>
    <property type="evidence" value="ECO:0000304"/>
    <property type="project" value="ProtInc"/>
</dbReference>
<dbReference type="GO" id="GO:0071544">
    <property type="term" value="P:diphosphoinositol polyphosphate catabolic process"/>
    <property type="evidence" value="ECO:0000314"/>
    <property type="project" value="UniProtKB"/>
</dbReference>
<dbReference type="GO" id="GO:0071543">
    <property type="term" value="P:diphosphoinositol polyphosphate metabolic process"/>
    <property type="evidence" value="ECO:0000318"/>
    <property type="project" value="GO_Central"/>
</dbReference>
<dbReference type="GO" id="GO:0110154">
    <property type="term" value="P:RNA decapping"/>
    <property type="evidence" value="ECO:0000314"/>
    <property type="project" value="UniProtKB"/>
</dbReference>
<dbReference type="CDD" id="cd04666">
    <property type="entry name" value="NUDIX_DIPP2_like_Nudt4"/>
    <property type="match status" value="1"/>
</dbReference>
<dbReference type="FunFam" id="3.90.79.10:FF:000002">
    <property type="entry name" value="diphosphoinositol polyphosphate phosphohydrolase 1"/>
    <property type="match status" value="1"/>
</dbReference>
<dbReference type="Gene3D" id="3.90.79.10">
    <property type="entry name" value="Nucleoside Triphosphate Pyrophosphohydrolase"/>
    <property type="match status" value="1"/>
</dbReference>
<dbReference type="InterPro" id="IPR047198">
    <property type="entry name" value="DDP-like_NUDIX"/>
</dbReference>
<dbReference type="InterPro" id="IPR015797">
    <property type="entry name" value="NUDIX_hydrolase-like_dom_sf"/>
</dbReference>
<dbReference type="InterPro" id="IPR020084">
    <property type="entry name" value="NUDIX_hydrolase_CS"/>
</dbReference>
<dbReference type="InterPro" id="IPR000086">
    <property type="entry name" value="NUDIX_hydrolase_dom"/>
</dbReference>
<dbReference type="PANTHER" id="PTHR12629">
    <property type="entry name" value="DIPHOSPHOINOSITOL POLYPHOSPHATE PHOSPHOHYDROLASE"/>
    <property type="match status" value="1"/>
</dbReference>
<dbReference type="PANTHER" id="PTHR12629:SF5">
    <property type="entry name" value="DIPHOSPHOINOSITOL POLYPHOSPHATE PHOSPHOHYDROLASE 1"/>
    <property type="match status" value="1"/>
</dbReference>
<dbReference type="Pfam" id="PF00293">
    <property type="entry name" value="NUDIX"/>
    <property type="match status" value="1"/>
</dbReference>
<dbReference type="SUPFAM" id="SSF55811">
    <property type="entry name" value="Nudix"/>
    <property type="match status" value="1"/>
</dbReference>
<dbReference type="PROSITE" id="PS51462">
    <property type="entry name" value="NUDIX"/>
    <property type="match status" value="1"/>
</dbReference>
<dbReference type="PROSITE" id="PS00893">
    <property type="entry name" value="NUDIX_BOX"/>
    <property type="match status" value="1"/>
</dbReference>
<protein>
    <recommendedName>
        <fullName evidence="12">Diphosphoinositol polyphosphate phosphohydrolase 1</fullName>
        <shortName>DIPP-1</shortName>
        <ecNumber evidence="5 6 10 11">3.6.1.52</ecNumber>
    </recommendedName>
    <alternativeName>
        <fullName>Diadenosine hexaphosphate hydrolase</fullName>
        <shortName>Ap6A hydrolase</shortName>
        <ecNumber evidence="4 5 6 10">3.6.1.61</ecNumber>
    </alternativeName>
    <alternativeName>
        <fullName>Endopolyphosphatase</fullName>
        <ecNumber evidence="10">3.6.1.10</ecNumber>
    </alternativeName>
    <alternativeName>
        <fullName>Nucleoside diphosphate-linked moiety X motif 3</fullName>
        <shortName>Nudix motif 3</shortName>
    </alternativeName>
    <alternativeName>
        <fullName>m7GpppN-mRNA hydrolase</fullName>
        <ecNumber evidence="10">3.6.1.62</ecNumber>
    </alternativeName>
    <alternativeName>
        <fullName>m7GpppX diphosphatase</fullName>
        <ecNumber evidence="10">3.6.1.59</ecNumber>
    </alternativeName>
</protein>
<reference key="1">
    <citation type="journal article" date="1998" name="EMBO J.">
        <title>A novel context for the 'MutT' module, a guardian of cell integrity, in a diphosphoinositol polyphosphate phosphohydrolase.</title>
        <authorList>
            <person name="Safrany S.T."/>
            <person name="Caffrey J.J."/>
            <person name="Yang X."/>
            <person name="Bembenek M.E."/>
            <person name="Moyer M.B."/>
            <person name="Burkhart W.A."/>
            <person name="Shears S.B."/>
        </authorList>
    </citation>
    <scope>NUCLEOTIDE SEQUENCE [MRNA]</scope>
    <scope>FUNCTION</scope>
    <scope>CATALYTIC ACTIVITY</scope>
    <scope>BIOPHYSICOCHEMICAL PROPERTIES</scope>
    <scope>TISSUE SPECIFICITY</scope>
    <scope>MUTAGENESIS OF GLU-70</scope>
    <source>
        <tissue>Uterus</tissue>
    </source>
</reference>
<reference key="2">
    <citation type="submission" date="2004-10" db="EMBL/GenBank/DDBJ databases">
        <title>Cloning of human full-length CDSs in BD Creator(TM) system donor vector.</title>
        <authorList>
            <person name="Kalnine N."/>
            <person name="Chen X."/>
            <person name="Rolfs A."/>
            <person name="Halleck A."/>
            <person name="Hines L."/>
            <person name="Eisenstein S."/>
            <person name="Koundinya M."/>
            <person name="Raphael J."/>
            <person name="Moreira D."/>
            <person name="Kelley T."/>
            <person name="LaBaer J."/>
            <person name="Lin Y."/>
            <person name="Phelan M."/>
            <person name="Farmer A."/>
        </authorList>
    </citation>
    <scope>NUCLEOTIDE SEQUENCE [LARGE SCALE MRNA]</scope>
</reference>
<reference key="3">
    <citation type="journal article" date="2004" name="Nat. Genet.">
        <title>Complete sequencing and characterization of 21,243 full-length human cDNAs.</title>
        <authorList>
            <person name="Ota T."/>
            <person name="Suzuki Y."/>
            <person name="Nishikawa T."/>
            <person name="Otsuki T."/>
            <person name="Sugiyama T."/>
            <person name="Irie R."/>
            <person name="Wakamatsu A."/>
            <person name="Hayashi K."/>
            <person name="Sato H."/>
            <person name="Nagai K."/>
            <person name="Kimura K."/>
            <person name="Makita H."/>
            <person name="Sekine M."/>
            <person name="Obayashi M."/>
            <person name="Nishi T."/>
            <person name="Shibahara T."/>
            <person name="Tanaka T."/>
            <person name="Ishii S."/>
            <person name="Yamamoto J."/>
            <person name="Saito K."/>
            <person name="Kawai Y."/>
            <person name="Isono Y."/>
            <person name="Nakamura Y."/>
            <person name="Nagahari K."/>
            <person name="Murakami K."/>
            <person name="Yasuda T."/>
            <person name="Iwayanagi T."/>
            <person name="Wagatsuma M."/>
            <person name="Shiratori A."/>
            <person name="Sudo H."/>
            <person name="Hosoiri T."/>
            <person name="Kaku Y."/>
            <person name="Kodaira H."/>
            <person name="Kondo H."/>
            <person name="Sugawara M."/>
            <person name="Takahashi M."/>
            <person name="Kanda K."/>
            <person name="Yokoi T."/>
            <person name="Furuya T."/>
            <person name="Kikkawa E."/>
            <person name="Omura Y."/>
            <person name="Abe K."/>
            <person name="Kamihara K."/>
            <person name="Katsuta N."/>
            <person name="Sato K."/>
            <person name="Tanikawa M."/>
            <person name="Yamazaki M."/>
            <person name="Ninomiya K."/>
            <person name="Ishibashi T."/>
            <person name="Yamashita H."/>
            <person name="Murakawa K."/>
            <person name="Fujimori K."/>
            <person name="Tanai H."/>
            <person name="Kimata M."/>
            <person name="Watanabe M."/>
            <person name="Hiraoka S."/>
            <person name="Chiba Y."/>
            <person name="Ishida S."/>
            <person name="Ono Y."/>
            <person name="Takiguchi S."/>
            <person name="Watanabe S."/>
            <person name="Yosida M."/>
            <person name="Hotuta T."/>
            <person name="Kusano J."/>
            <person name="Kanehori K."/>
            <person name="Takahashi-Fujii A."/>
            <person name="Hara H."/>
            <person name="Tanase T.-O."/>
            <person name="Nomura Y."/>
            <person name="Togiya S."/>
            <person name="Komai F."/>
            <person name="Hara R."/>
            <person name="Takeuchi K."/>
            <person name="Arita M."/>
            <person name="Imose N."/>
            <person name="Musashino K."/>
            <person name="Yuuki H."/>
            <person name="Oshima A."/>
            <person name="Sasaki N."/>
            <person name="Aotsuka S."/>
            <person name="Yoshikawa Y."/>
            <person name="Matsunawa H."/>
            <person name="Ichihara T."/>
            <person name="Shiohata N."/>
            <person name="Sano S."/>
            <person name="Moriya S."/>
            <person name="Momiyama H."/>
            <person name="Satoh N."/>
            <person name="Takami S."/>
            <person name="Terashima Y."/>
            <person name="Suzuki O."/>
            <person name="Nakagawa S."/>
            <person name="Senoh A."/>
            <person name="Mizoguchi H."/>
            <person name="Goto Y."/>
            <person name="Shimizu F."/>
            <person name="Wakebe H."/>
            <person name="Hishigaki H."/>
            <person name="Watanabe T."/>
            <person name="Sugiyama A."/>
            <person name="Takemoto M."/>
            <person name="Kawakami B."/>
            <person name="Yamazaki M."/>
            <person name="Watanabe K."/>
            <person name="Kumagai A."/>
            <person name="Itakura S."/>
            <person name="Fukuzumi Y."/>
            <person name="Fujimori Y."/>
            <person name="Komiyama M."/>
            <person name="Tashiro H."/>
            <person name="Tanigami A."/>
            <person name="Fujiwara T."/>
            <person name="Ono T."/>
            <person name="Yamada K."/>
            <person name="Fujii Y."/>
            <person name="Ozaki K."/>
            <person name="Hirao M."/>
            <person name="Ohmori Y."/>
            <person name="Kawabata A."/>
            <person name="Hikiji T."/>
            <person name="Kobatake N."/>
            <person name="Inagaki H."/>
            <person name="Ikema Y."/>
            <person name="Okamoto S."/>
            <person name="Okitani R."/>
            <person name="Kawakami T."/>
            <person name="Noguchi S."/>
            <person name="Itoh T."/>
            <person name="Shigeta K."/>
            <person name="Senba T."/>
            <person name="Matsumura K."/>
            <person name="Nakajima Y."/>
            <person name="Mizuno T."/>
            <person name="Morinaga M."/>
            <person name="Sasaki M."/>
            <person name="Togashi T."/>
            <person name="Oyama M."/>
            <person name="Hata H."/>
            <person name="Watanabe M."/>
            <person name="Komatsu T."/>
            <person name="Mizushima-Sugano J."/>
            <person name="Satoh T."/>
            <person name="Shirai Y."/>
            <person name="Takahashi Y."/>
            <person name="Nakagawa K."/>
            <person name="Okumura K."/>
            <person name="Nagase T."/>
            <person name="Nomura N."/>
            <person name="Kikuchi H."/>
            <person name="Masuho Y."/>
            <person name="Yamashita R."/>
            <person name="Nakai K."/>
            <person name="Yada T."/>
            <person name="Nakamura Y."/>
            <person name="Ohara O."/>
            <person name="Isogai T."/>
            <person name="Sugano S."/>
        </authorList>
    </citation>
    <scope>NUCLEOTIDE SEQUENCE [LARGE SCALE MRNA]</scope>
    <source>
        <tissue>Amygdala</tissue>
    </source>
</reference>
<reference key="4">
    <citation type="journal article" date="2003" name="Nature">
        <title>The DNA sequence and analysis of human chromosome 6.</title>
        <authorList>
            <person name="Mungall A.J."/>
            <person name="Palmer S.A."/>
            <person name="Sims S.K."/>
            <person name="Edwards C.A."/>
            <person name="Ashurst J.L."/>
            <person name="Wilming L."/>
            <person name="Jones M.C."/>
            <person name="Horton R."/>
            <person name="Hunt S.E."/>
            <person name="Scott C.E."/>
            <person name="Gilbert J.G.R."/>
            <person name="Clamp M.E."/>
            <person name="Bethel G."/>
            <person name="Milne S."/>
            <person name="Ainscough R."/>
            <person name="Almeida J.P."/>
            <person name="Ambrose K.D."/>
            <person name="Andrews T.D."/>
            <person name="Ashwell R.I.S."/>
            <person name="Babbage A.K."/>
            <person name="Bagguley C.L."/>
            <person name="Bailey J."/>
            <person name="Banerjee R."/>
            <person name="Barker D.J."/>
            <person name="Barlow K.F."/>
            <person name="Bates K."/>
            <person name="Beare D.M."/>
            <person name="Beasley H."/>
            <person name="Beasley O."/>
            <person name="Bird C.P."/>
            <person name="Blakey S.E."/>
            <person name="Bray-Allen S."/>
            <person name="Brook J."/>
            <person name="Brown A.J."/>
            <person name="Brown J.Y."/>
            <person name="Burford D.C."/>
            <person name="Burrill W."/>
            <person name="Burton J."/>
            <person name="Carder C."/>
            <person name="Carter N.P."/>
            <person name="Chapman J.C."/>
            <person name="Clark S.Y."/>
            <person name="Clark G."/>
            <person name="Clee C.M."/>
            <person name="Clegg S."/>
            <person name="Cobley V."/>
            <person name="Collier R.E."/>
            <person name="Collins J.E."/>
            <person name="Colman L.K."/>
            <person name="Corby N.R."/>
            <person name="Coville G.J."/>
            <person name="Culley K.M."/>
            <person name="Dhami P."/>
            <person name="Davies J."/>
            <person name="Dunn M."/>
            <person name="Earthrowl M.E."/>
            <person name="Ellington A.E."/>
            <person name="Evans K.A."/>
            <person name="Faulkner L."/>
            <person name="Francis M.D."/>
            <person name="Frankish A."/>
            <person name="Frankland J."/>
            <person name="French L."/>
            <person name="Garner P."/>
            <person name="Garnett J."/>
            <person name="Ghori M.J."/>
            <person name="Gilby L.M."/>
            <person name="Gillson C.J."/>
            <person name="Glithero R.J."/>
            <person name="Grafham D.V."/>
            <person name="Grant M."/>
            <person name="Gribble S."/>
            <person name="Griffiths C."/>
            <person name="Griffiths M.N.D."/>
            <person name="Hall R."/>
            <person name="Halls K.S."/>
            <person name="Hammond S."/>
            <person name="Harley J.L."/>
            <person name="Hart E.A."/>
            <person name="Heath P.D."/>
            <person name="Heathcott R."/>
            <person name="Holmes S.J."/>
            <person name="Howden P.J."/>
            <person name="Howe K.L."/>
            <person name="Howell G.R."/>
            <person name="Huckle E."/>
            <person name="Humphray S.J."/>
            <person name="Humphries M.D."/>
            <person name="Hunt A.R."/>
            <person name="Johnson C.M."/>
            <person name="Joy A.A."/>
            <person name="Kay M."/>
            <person name="Keenan S.J."/>
            <person name="Kimberley A.M."/>
            <person name="King A."/>
            <person name="Laird G.K."/>
            <person name="Langford C."/>
            <person name="Lawlor S."/>
            <person name="Leongamornlert D.A."/>
            <person name="Leversha M."/>
            <person name="Lloyd C.R."/>
            <person name="Lloyd D.M."/>
            <person name="Loveland J.E."/>
            <person name="Lovell J."/>
            <person name="Martin S."/>
            <person name="Mashreghi-Mohammadi M."/>
            <person name="Maslen G.L."/>
            <person name="Matthews L."/>
            <person name="McCann O.T."/>
            <person name="McLaren S.J."/>
            <person name="McLay K."/>
            <person name="McMurray A."/>
            <person name="Moore M.J.F."/>
            <person name="Mullikin J.C."/>
            <person name="Niblett D."/>
            <person name="Nickerson T."/>
            <person name="Novik K.L."/>
            <person name="Oliver K."/>
            <person name="Overton-Larty E.K."/>
            <person name="Parker A."/>
            <person name="Patel R."/>
            <person name="Pearce A.V."/>
            <person name="Peck A.I."/>
            <person name="Phillimore B.J.C.T."/>
            <person name="Phillips S."/>
            <person name="Plumb R.W."/>
            <person name="Porter K.M."/>
            <person name="Ramsey Y."/>
            <person name="Ranby S.A."/>
            <person name="Rice C.M."/>
            <person name="Ross M.T."/>
            <person name="Searle S.M."/>
            <person name="Sehra H.K."/>
            <person name="Sheridan E."/>
            <person name="Skuce C.D."/>
            <person name="Smith S."/>
            <person name="Smith M."/>
            <person name="Spraggon L."/>
            <person name="Squares S.L."/>
            <person name="Steward C.A."/>
            <person name="Sycamore N."/>
            <person name="Tamlyn-Hall G."/>
            <person name="Tester J."/>
            <person name="Theaker A.J."/>
            <person name="Thomas D.W."/>
            <person name="Thorpe A."/>
            <person name="Tracey A."/>
            <person name="Tromans A."/>
            <person name="Tubby B."/>
            <person name="Wall M."/>
            <person name="Wallis J.M."/>
            <person name="West A.P."/>
            <person name="White S.S."/>
            <person name="Whitehead S.L."/>
            <person name="Whittaker H."/>
            <person name="Wild A."/>
            <person name="Willey D.J."/>
            <person name="Wilmer T.E."/>
            <person name="Wood J.M."/>
            <person name="Wray P.W."/>
            <person name="Wyatt J.C."/>
            <person name="Young L."/>
            <person name="Younger R.M."/>
            <person name="Bentley D.R."/>
            <person name="Coulson A."/>
            <person name="Durbin R.M."/>
            <person name="Hubbard T."/>
            <person name="Sulston J.E."/>
            <person name="Dunham I."/>
            <person name="Rogers J."/>
            <person name="Beck S."/>
        </authorList>
    </citation>
    <scope>NUCLEOTIDE SEQUENCE [LARGE SCALE GENOMIC DNA]</scope>
</reference>
<reference key="5">
    <citation type="submission" date="2005-07" db="EMBL/GenBank/DDBJ databases">
        <authorList>
            <person name="Mural R.J."/>
            <person name="Istrail S."/>
            <person name="Sutton G.G."/>
            <person name="Florea L."/>
            <person name="Halpern A.L."/>
            <person name="Mobarry C.M."/>
            <person name="Lippert R."/>
            <person name="Walenz B."/>
            <person name="Shatkay H."/>
            <person name="Dew I."/>
            <person name="Miller J.R."/>
            <person name="Flanigan M.J."/>
            <person name="Edwards N.J."/>
            <person name="Bolanos R."/>
            <person name="Fasulo D."/>
            <person name="Halldorsson B.V."/>
            <person name="Hannenhalli S."/>
            <person name="Turner R."/>
            <person name="Yooseph S."/>
            <person name="Lu F."/>
            <person name="Nusskern D.R."/>
            <person name="Shue B.C."/>
            <person name="Zheng X.H."/>
            <person name="Zhong F."/>
            <person name="Delcher A.L."/>
            <person name="Huson D.H."/>
            <person name="Kravitz S.A."/>
            <person name="Mouchard L."/>
            <person name="Reinert K."/>
            <person name="Remington K.A."/>
            <person name="Clark A.G."/>
            <person name="Waterman M.S."/>
            <person name="Eichler E.E."/>
            <person name="Adams M.D."/>
            <person name="Hunkapiller M.W."/>
            <person name="Myers E.W."/>
            <person name="Venter J.C."/>
        </authorList>
    </citation>
    <scope>NUCLEOTIDE SEQUENCE [LARGE SCALE GENOMIC DNA]</scope>
</reference>
<reference key="6">
    <citation type="journal article" date="2004" name="Genome Res.">
        <title>The status, quality, and expansion of the NIH full-length cDNA project: the Mammalian Gene Collection (MGC).</title>
        <authorList>
            <consortium name="The MGC Project Team"/>
        </authorList>
    </citation>
    <scope>NUCLEOTIDE SEQUENCE [LARGE SCALE MRNA]</scope>
    <source>
        <tissue>Uterus</tissue>
    </source>
</reference>
<reference key="7">
    <citation type="journal article" date="1999" name="J. Biol. Chem.">
        <title>The diadenosine hexaphosphate hydrolases from Schizosaccharomyces pombe and Saccharomyces cerevisiae are homologues of the human diphosphoinositol polyphosphate phosphohydrolase. Overlapping substrate specificities in a MutT-type protein.</title>
        <authorList>
            <person name="Safrany S.T."/>
            <person name="Ingram S.W."/>
            <person name="Cartwright J.L."/>
            <person name="Falck J.R."/>
            <person name="McLennan A.G."/>
            <person name="Barnes L.D."/>
            <person name="Shears S.B."/>
        </authorList>
    </citation>
    <scope>FUNCTION</scope>
    <scope>CATALYTIC ACTIVITY</scope>
    <scope>BIOPHYSICOCHEMICAL PROPERTIES</scope>
</reference>
<reference key="8">
    <citation type="journal article" date="1999" name="J. Biol. Chem.">
        <title>Site-directed mutagenesis of diphosphoinositol polyphosphate phosphohydrolase, a dual specificity NUDT enzyme that attacks diadenosine polyphosphates and diphosphoinositol polyphosphates.</title>
        <authorList>
            <person name="Yang X."/>
            <person name="Safrany S.T."/>
            <person name="Shears S.B."/>
        </authorList>
    </citation>
    <scope>FUNCTION</scope>
    <scope>CATALYTIC ACTIVITY</scope>
    <scope>MUTAGENESIS OF GLY-50; GLY-51; GLY-52; GLU-66; GLY-72; GLY-75; GLY-78; GLY-82; PHE-84 AND HIS-91</scope>
</reference>
<reference key="9">
    <citation type="journal article" date="2002" name="J. Biol. Chem.">
        <title>Nudix hydrolases that degrade dinucleoside and diphosphoinositol polyphosphates also have 5-phosphoribosyl 1-pyrophosphate (PRPP) pyrophosphatase activity that generates the glycolytic activator ribose 1,5-bisphosphate.</title>
        <authorList>
            <person name="Fisher D.I."/>
            <person name="Safrany S.T."/>
            <person name="Strike P."/>
            <person name="McLennan A.G."/>
            <person name="Cartwright J.L."/>
        </authorList>
    </citation>
    <scope>FUNCTION</scope>
    <scope>CATALYTIC ACTIVITY</scope>
    <scope>BIOPHYSICOCHEMICAL PROPERTIES</scope>
</reference>
<reference key="10">
    <citation type="journal article" date="2011" name="BMC Syst. Biol.">
        <title>Initial characterization of the human central proteome.</title>
        <authorList>
            <person name="Burkard T.R."/>
            <person name="Planyavsky M."/>
            <person name="Kaupe I."/>
            <person name="Breitwieser F.P."/>
            <person name="Buerckstuemmer T."/>
            <person name="Bennett K.L."/>
            <person name="Superti-Furga G."/>
            <person name="Colinge J."/>
        </authorList>
    </citation>
    <scope>IDENTIFICATION BY MASS SPECTROMETRY [LARGE SCALE ANALYSIS]</scope>
</reference>
<reference key="11">
    <citation type="journal article" date="2012" name="Proc. Natl. Acad. Sci. U.S.A.">
        <title>N-terminal acetylome analyses and functional insights of the N-terminal acetyltransferase NatB.</title>
        <authorList>
            <person name="Van Damme P."/>
            <person name="Lasa M."/>
            <person name="Polevoda B."/>
            <person name="Gazquez C."/>
            <person name="Elosegui-Artola A."/>
            <person name="Kim D.S."/>
            <person name="De Juan-Pardo E."/>
            <person name="Demeyer K."/>
            <person name="Hole K."/>
            <person name="Larrea E."/>
            <person name="Timmerman E."/>
            <person name="Prieto J."/>
            <person name="Arnesen T."/>
            <person name="Sherman F."/>
            <person name="Gevaert K."/>
            <person name="Aldabe R."/>
        </authorList>
    </citation>
    <scope>ACETYLATION [LARGE SCALE ANALYSIS] AT MET-1</scope>
    <scope>IDENTIFICATION BY MASS SPECTROMETRY [LARGE SCALE ANALYSIS]</scope>
</reference>
<reference key="12">
    <citation type="journal article" date="2016" name="RNA">
        <title>Nudt3 is an mRNA decapping enzyme that modulates cell migration.</title>
        <authorList>
            <person name="Grudzien-Nogalska E."/>
            <person name="Jiao X."/>
            <person name="Song M.G."/>
            <person name="Hart R.P."/>
            <person name="Kiledjian M."/>
        </authorList>
    </citation>
    <scope>FUNCTION</scope>
    <scope>CATALYTIC ACTIVITY</scope>
    <scope>MUTAGENESIS OF 69-GLU--GLU-70</scope>
</reference>
<reference key="13">
    <citation type="journal article" date="2020" name="Proc. Natl. Acad. Sci. U.S.A.">
        <title>InsP7 is a small-molecule regulator of NUDT3-mediated mRNA decapping and processing-body dynamics.</title>
        <authorList>
            <person name="Sahu S."/>
            <person name="Wang Z."/>
            <person name="Jiao X."/>
            <person name="Gu C."/>
            <person name="Jork N."/>
            <person name="Wittwer C."/>
            <person name="Li X."/>
            <person name="Hostachy S."/>
            <person name="Fiedler D."/>
            <person name="Wang H."/>
            <person name="Jessen H.J."/>
            <person name="Kiledjian M."/>
            <person name="Shears S.B."/>
        </authorList>
    </citation>
    <scope>FUNCTION</scope>
    <scope>CATALYTIC ACTIVITY</scope>
    <scope>ACTIVITY REGULATION</scope>
</reference>
<reference key="14">
    <citation type="journal article" date="2021" name="Cell Rep.">
        <title>Polyphosphate degradation by Nudt3-Zn2+ mediates oxidative stress response.</title>
        <authorList>
            <person name="Samper-Martin B."/>
            <person name="Sarrias A."/>
            <person name="Lazaro B."/>
            <person name="Perez-Montero M."/>
            <person name="Rodriguez-Rodriguez R."/>
            <person name="Ribeiro M.P.C."/>
            <person name="Banon A."/>
            <person name="Wolfgeher D."/>
            <person name="Jessen H.J."/>
            <person name="Alsina B."/>
            <person name="Clotet J."/>
            <person name="Kron S.J."/>
            <person name="Saiardi A."/>
            <person name="Jimenez J."/>
            <person name="Bru S."/>
        </authorList>
    </citation>
    <scope>FUNCTION</scope>
    <scope>CATALYTIC ACTIVITY</scope>
    <scope>ACTIVITY REGULATION</scope>
    <scope>BIOPHYSICOCHEMICAL PROPERTIES</scope>
    <scope>COFACTOR</scope>
    <scope>SUBCELLULAR LOCATION</scope>
    <scope>MUTAGENESIS OF GLU-70</scope>
</reference>
<reference key="15">
    <citation type="journal article" date="2009" name="Proteins">
        <title>Crystal structure of human diphosphoinositol phosphatase 1.</title>
        <authorList>
            <person name="Thorsell A.G."/>
            <person name="Persson C."/>
            <person name="Graslund S."/>
            <person name="Hammarstrom M."/>
            <person name="Busam R.D."/>
            <person name="Hallberg B.M."/>
        </authorList>
    </citation>
    <scope>X-RAY CRYSTALLOGRAPHY (1.25 ANGSTROMS) IN COMPLEX WITH MAGNESIUM IONS; FLUORIDE AND INOSITOL HEXAKISPHOSPHATE</scope>
    <scope>COFACTOR</scope>
</reference>
<name>NUDT3_HUMAN</name>
<comment type="function">
    <text evidence="2 4 5 6 10 11 13">Cleaves a beta-phosphate from the diphosphate groups in PP-InsP5 (diphosphoinositol pentakisphosphate) and [PP]2-InsP4 (bisdiphosphoinositol tetrakisphosphate), suggesting that it may play a role in signal transduction (PubMed:10585413, PubMed:12370170, PubMed:9822604). InsP6 (inositol hexakisphosphate) is not a substrate (PubMed:9822604). Acts as a negative regulator of the ERK1/2 pathway (By similarity). Also able to catalyze the hydrolysis of dinucleoside oligophosphates, with diadenosine 5',5'''-P1,P6-hexaphosphate (Ap6A) and diadenosine 5',5'''- P1,P5-pentaphosphate (Ap5A) being the preferred substrates (PubMed:10419486, PubMed:12370170). The major reaction products are ADP and p4a from Ap6A and ADP and ATP from Ap5A (PubMed:12370170). Also able to hydrolyze 5-phosphoribose 1-diphosphate (PubMed:12370170). Acts as a decapping enzyme that modulates the stability of a subset of mRNAs implicated in cell motility (PubMed:26932476). Hydrolyzes monomethylated capped RNA after both the alpha- and beta-phosphates generating m7GMP + ppRNA and m7GDP + pRNA (PubMed:32727897). Can hydrolyze unmethylated capped RNAs (By similarity). Divalent cations zinc, magnesium and manganese determine its substrate specificity (PubMed:34788624). Exhibits diphosphoinositol polyphosphate phosphohydrolase in the presence of magnesium ions, diadenosine hexaphosphate hydrolase activity in the presence of manganese ions and endopolyphosphatase activity in the presence of zinc ions (PubMed:34788624). Plays an important role in limiting DNA damage and maintaining cell survival upon oxidative stress via its endopolyphosphatase activity (PubMed:34788624).</text>
</comment>
<comment type="catalytic activity">
    <reaction evidence="5 6 10 11">
        <text>diphospho-myo-inositol polyphosphate + H2O = myo-inositol polyphosphate + phosphate.</text>
        <dbReference type="EC" id="3.6.1.52"/>
    </reaction>
</comment>
<comment type="catalytic activity">
    <reaction evidence="5 6 10 11">
        <text>5-diphospho-1D-myo-inositol 1,2,3,4,6-pentakisphosphate + H2O = 1D-myo-inositol hexakisphosphate + phosphate + H(+)</text>
        <dbReference type="Rhea" id="RHEA:22384"/>
        <dbReference type="ChEBI" id="CHEBI:15377"/>
        <dbReference type="ChEBI" id="CHEBI:15378"/>
        <dbReference type="ChEBI" id="CHEBI:43474"/>
        <dbReference type="ChEBI" id="CHEBI:58130"/>
        <dbReference type="ChEBI" id="CHEBI:58628"/>
        <dbReference type="EC" id="3.6.1.52"/>
    </reaction>
</comment>
<comment type="catalytic activity">
    <reaction evidence="5 6 10 11">
        <text>3,5-bis(diphospho)-1D-myo-inositol 1,2,4,6-tetrakisphosphate + H2O = 3-diphospho-1D-myo-inositol 1,2,4,5,6-pentakisphosphate + phosphate + 2 H(+)</text>
        <dbReference type="Rhea" id="RHEA:56312"/>
        <dbReference type="ChEBI" id="CHEBI:15377"/>
        <dbReference type="ChEBI" id="CHEBI:15378"/>
        <dbReference type="ChEBI" id="CHEBI:43474"/>
        <dbReference type="ChEBI" id="CHEBI:140372"/>
        <dbReference type="ChEBI" id="CHEBI:140374"/>
        <dbReference type="EC" id="3.6.1.52"/>
    </reaction>
</comment>
<comment type="catalytic activity">
    <reaction evidence="10">
        <text>[phosphate](n+1) + n H2O = (n+1) phosphate + n H(+)</text>
        <dbReference type="Rhea" id="RHEA:22452"/>
        <dbReference type="Rhea" id="RHEA-COMP:14280"/>
        <dbReference type="ChEBI" id="CHEBI:15377"/>
        <dbReference type="ChEBI" id="CHEBI:15378"/>
        <dbReference type="ChEBI" id="CHEBI:16838"/>
        <dbReference type="ChEBI" id="CHEBI:43474"/>
        <dbReference type="EC" id="3.6.1.10"/>
    </reaction>
</comment>
<comment type="catalytic activity">
    <reaction evidence="4 5 6 10">
        <text>P(1),P(5)-bis(5'-adenosyl) pentaphosphate + H2O = ADP + ATP + 2 H(+)</text>
        <dbReference type="Rhea" id="RHEA:30527"/>
        <dbReference type="ChEBI" id="CHEBI:15377"/>
        <dbReference type="ChEBI" id="CHEBI:15378"/>
        <dbReference type="ChEBI" id="CHEBI:30616"/>
        <dbReference type="ChEBI" id="CHEBI:62041"/>
        <dbReference type="ChEBI" id="CHEBI:456216"/>
        <dbReference type="EC" id="3.6.1.61"/>
    </reaction>
</comment>
<comment type="catalytic activity">
    <reaction evidence="4 5 6">
        <text>P(1),P(6)-bis(5'-adenosyl) hexaphosphate + H2O = 2 ATP + 2 H(+)</text>
        <dbReference type="Rhea" id="RHEA:32043"/>
        <dbReference type="ChEBI" id="CHEBI:15377"/>
        <dbReference type="ChEBI" id="CHEBI:15378"/>
        <dbReference type="ChEBI" id="CHEBI:30616"/>
        <dbReference type="ChEBI" id="CHEBI:63740"/>
        <dbReference type="EC" id="3.6.1.61"/>
    </reaction>
</comment>
<comment type="catalytic activity">
    <reaction evidence="4 5 6">
        <text>P(1),P(4)-bis(5'-adenosyl) tetraphosphate + H2O = AMP + ATP + 2 H(+)</text>
        <dbReference type="Rhea" id="RHEA:32039"/>
        <dbReference type="ChEBI" id="CHEBI:15377"/>
        <dbReference type="ChEBI" id="CHEBI:15378"/>
        <dbReference type="ChEBI" id="CHEBI:30616"/>
        <dbReference type="ChEBI" id="CHEBI:58141"/>
        <dbReference type="ChEBI" id="CHEBI:456215"/>
        <dbReference type="EC" id="3.6.1.61"/>
    </reaction>
</comment>
<comment type="catalytic activity">
    <reaction evidence="9">
        <text>a 5'-end (N(7)-methyl 5'-triphosphoguanosine)-ribonucleoside in mRNA + H2O = N(7)-methyl-GMP + a 5'-end diphospho-ribonucleoside in mRNA + 2 H(+)</text>
        <dbReference type="Rhea" id="RHEA:65388"/>
        <dbReference type="Rhea" id="RHEA-COMP:17165"/>
        <dbReference type="Rhea" id="RHEA-COMP:17167"/>
        <dbReference type="ChEBI" id="CHEBI:15377"/>
        <dbReference type="ChEBI" id="CHEBI:15378"/>
        <dbReference type="ChEBI" id="CHEBI:58285"/>
        <dbReference type="ChEBI" id="CHEBI:156461"/>
        <dbReference type="ChEBI" id="CHEBI:167616"/>
        <dbReference type="EC" id="3.6.1.59"/>
    </reaction>
</comment>
<comment type="catalytic activity">
    <reaction evidence="9">
        <text>a 5'-end (N(7)-methyl 5'-triphosphoguanosine)-ribonucleoside in mRNA + H2O = N(7)-methyl-GDP + a 5'-end phospho-ribonucleoside in mRNA + 2 H(+)</text>
        <dbReference type="Rhea" id="RHEA:67484"/>
        <dbReference type="Rhea" id="RHEA-COMP:15692"/>
        <dbReference type="Rhea" id="RHEA-COMP:17167"/>
        <dbReference type="ChEBI" id="CHEBI:15377"/>
        <dbReference type="ChEBI" id="CHEBI:15378"/>
        <dbReference type="ChEBI" id="CHEBI:63714"/>
        <dbReference type="ChEBI" id="CHEBI:138282"/>
        <dbReference type="ChEBI" id="CHEBI:156461"/>
        <dbReference type="EC" id="3.6.1.62"/>
    </reaction>
</comment>
<comment type="cofactor">
    <cofactor evidence="7 10">
        <name>Mg(2+)</name>
        <dbReference type="ChEBI" id="CHEBI:18420"/>
    </cofactor>
    <cofactor evidence="10">
        <name>Mn(2+)</name>
        <dbReference type="ChEBI" id="CHEBI:29035"/>
    </cofactor>
    <cofactor evidence="10">
        <name>Zn(2+)</name>
        <dbReference type="ChEBI" id="CHEBI:29105"/>
    </cofactor>
    <text evidence="7">Binds 3 Mg(2+) ions per subunit.</text>
</comment>
<comment type="activity regulation">
    <text evidence="9 10">Endopolyphospahatase activity is inhibited by NaF, NaPPi, beta-glycerol phosphate and heparin (PubMed:34788624). 5-diphosphoinositol pentakisphosphate (5-InsP7) inhibits its mRNA decapping activity (PubMed:32727897).</text>
</comment>
<comment type="biophysicochemical properties">
    <kinetics>
        <KM evidence="4 6">5.9 uM for Ap6A</KM>
        <KM evidence="4">7.7 uM for Ap5A</KM>
        <KM evidence="6">38 mM for 5-phosphoribose 1-diphosphate</KM>
        <KM evidence="6">4.2 nM for PP-InsP5</KM>
    </kinetics>
    <phDependence>
        <text evidence="10 11">Optimum pH is 7.0-7.5 for PP-InsP5 hydrolysis. Displays strong endopolyphosphatase activity at pH 6.8 and 7.4.</text>
    </phDependence>
</comment>
<comment type="subunit">
    <text evidence="1">Monomer.</text>
</comment>
<comment type="interaction">
    <interactant intactId="EBI-713708">
        <id>O95989</id>
    </interactant>
    <interactant intactId="EBI-742054">
        <id>Q96D03</id>
        <label>DDIT4L</label>
    </interactant>
    <organismsDiffer>false</organismsDiffer>
    <experiments>3</experiments>
</comment>
<comment type="subcellular location">
    <subcellularLocation>
        <location evidence="10">Cytoplasm</location>
    </subcellularLocation>
    <subcellularLocation>
        <location evidence="10">Nucleus</location>
    </subcellularLocation>
</comment>
<comment type="tissue specificity">
    <text evidence="11">Widely expressed. Expressed at higher level in brain, heart, pancreas and liver. Also expressed in placenta, lung and kidney.</text>
</comment>
<comment type="similarity">
    <text evidence="12">Belongs to the Nudix hydrolase family. DIPP subfamily.</text>
</comment>
<sequence>MMKLKSNQTRTYDGDGYKKRAACLCFRSESEEEVLLVSSSRHPDRWIVPGGGMEPEEEPSVAAVREVCEEAGVKGTLGRLVGIFENQERKHRTYVYVLIVTEVLEDWEDSVNIGRKREWFKIEDAIKVLQYHKPVQASYFETLRQGYSANNGTPVVATTYSVSAQSSMSGIR</sequence>
<feature type="chain" id="PRO_0000057055" description="Diphosphoinositol polyphosphate phosphohydrolase 1">
    <location>
        <begin position="1"/>
        <end position="172"/>
    </location>
</feature>
<feature type="domain" description="Nudix hydrolase" evidence="3">
    <location>
        <begin position="17"/>
        <end position="142"/>
    </location>
</feature>
<feature type="short sequence motif" description="Nudix box">
    <location>
        <begin position="51"/>
        <end position="72"/>
    </location>
</feature>
<feature type="active site" description="Proton acceptor" evidence="12">
    <location>
        <position position="69"/>
    </location>
</feature>
<feature type="binding site" evidence="7 15 16">
    <location>
        <position position="10"/>
    </location>
    <ligand>
        <name>substrate</name>
    </ligand>
</feature>
<feature type="binding site" evidence="7 15 16">
    <location>
        <begin position="18"/>
        <end position="20"/>
    </location>
    <ligand>
        <name>substrate</name>
    </ligand>
</feature>
<feature type="binding site" evidence="7 15 16">
    <location>
        <begin position="39"/>
        <end position="41"/>
    </location>
    <ligand>
        <name>substrate</name>
    </ligand>
</feature>
<feature type="binding site" evidence="7 16">
    <location>
        <position position="50"/>
    </location>
    <ligand>
        <name>Mg(2+)</name>
        <dbReference type="ChEBI" id="CHEBI:18420"/>
        <label>1</label>
    </ligand>
</feature>
<feature type="binding site" evidence="7 16">
    <location>
        <position position="66"/>
    </location>
    <ligand>
        <name>Mg(2+)</name>
        <dbReference type="ChEBI" id="CHEBI:18420"/>
        <label>2</label>
    </ligand>
</feature>
<feature type="binding site" evidence="7 16">
    <location>
        <position position="66"/>
    </location>
    <ligand>
        <name>Mg(2+)</name>
        <dbReference type="ChEBI" id="CHEBI:18420"/>
        <label>3</label>
    </ligand>
</feature>
<feature type="binding site" evidence="7 16">
    <location>
        <position position="70"/>
    </location>
    <ligand>
        <name>Mg(2+)</name>
        <dbReference type="ChEBI" id="CHEBI:18420"/>
        <label>1</label>
    </ligand>
</feature>
<feature type="binding site" evidence="7 15 16">
    <location>
        <begin position="89"/>
        <end position="91"/>
    </location>
    <ligand>
        <name>substrate</name>
    </ligand>
</feature>
<feature type="binding site" evidence="7 16">
    <location>
        <position position="115"/>
    </location>
    <ligand>
        <name>substrate</name>
    </ligand>
</feature>
<feature type="binding site" evidence="7 15 16">
    <location>
        <position position="133"/>
    </location>
    <ligand>
        <name>substrate</name>
    </ligand>
</feature>
<feature type="modified residue" description="N-acetylmethionine" evidence="17">
    <location>
        <position position="1"/>
    </location>
</feature>
<feature type="mutagenesis site" description="Loss of diphosphoinositol polyphosphate phosphohydrolase activity." evidence="5">
    <original>G</original>
    <variation>A</variation>
    <variation>V</variation>
    <location>
        <position position="50"/>
    </location>
</feature>
<feature type="mutagenesis site" description="Loss of diphosphoinositol polyphosphate phosphohydrolase activity." evidence="5">
    <original>G</original>
    <variation>A</variation>
    <location>
        <position position="51"/>
    </location>
</feature>
<feature type="mutagenesis site" description="Loss of diphosphoinositol polyphosphate phosphohydrolase activity." evidence="5">
    <original>G</original>
    <variation>A</variation>
    <variation>V</variation>
    <location>
        <position position="52"/>
    </location>
</feature>
<feature type="mutagenesis site" description="Loss of diphosphoinositol polyphosphate phosphohydrolase activity." evidence="5">
    <original>E</original>
    <variation>Q</variation>
    <location>
        <position position="66"/>
    </location>
</feature>
<feature type="mutagenesis site" description="Loss of mRNA-decapping activity." evidence="8">
    <original>EE</original>
    <variation>QQ</variation>
    <location>
        <begin position="69"/>
        <end position="70"/>
    </location>
</feature>
<feature type="mutagenesis site" description="Loss of endopolyphosphatase activity." evidence="10">
    <original>E</original>
    <variation>A</variation>
    <location>
        <position position="70"/>
    </location>
</feature>
<feature type="mutagenesis site" description="Loss of diphosphoinositol polyphosphate phosphohydrolase activity." evidence="11">
    <original>E</original>
    <variation>Q</variation>
    <location>
        <position position="70"/>
    </location>
</feature>
<feature type="mutagenesis site" description="Loss of diphosphoinositol polyphosphate phosphohydrolase activity." evidence="5">
    <original>G</original>
    <variation>A</variation>
    <location>
        <position position="72"/>
    </location>
</feature>
<feature type="mutagenesis site" description="Loss of diphosphoinositol polyphosphate phosphohydrolase activity." evidence="5">
    <original>G</original>
    <variation>A</variation>
    <location>
        <position position="75"/>
    </location>
</feature>
<feature type="mutagenesis site" description="No effect on diphosphoinositol polyphosphate phosphohydrolase activity." evidence="5">
    <original>G</original>
    <variation>A</variation>
    <location>
        <position position="78"/>
    </location>
</feature>
<feature type="mutagenesis site" description="Loss of diphosphoinositol polyphosphate phosphohydrolase activity." evidence="5">
    <original>G</original>
    <variation>V</variation>
    <location>
        <position position="78"/>
    </location>
</feature>
<feature type="mutagenesis site" description="Loss of diphosphoinositol polyphosphate phosphohydrolase activity." evidence="5">
    <original>G</original>
    <variation>A</variation>
    <location>
        <position position="82"/>
    </location>
</feature>
<feature type="mutagenesis site" description="Induces a strong decrease in Ap6A and [PP]-InsP4 hydrolysis, while it only weakly affects PP-InsP5 hydrolysis." evidence="5">
    <original>F</original>
    <variation>Y</variation>
    <location>
        <position position="84"/>
    </location>
</feature>
<feature type="mutagenesis site" description="Induces a strong decrease in Ap6A and [PP]-InsP4 hydrolysis, while it only weakly affects PP-InsP5 hydrolysis." evidence="5">
    <original>H</original>
    <variation>L</variation>
    <location>
        <position position="91"/>
    </location>
</feature>
<feature type="strand" evidence="18">
    <location>
        <begin position="18"/>
        <end position="28"/>
    </location>
</feature>
<feature type="strand" evidence="18">
    <location>
        <begin position="33"/>
        <end position="38"/>
    </location>
</feature>
<feature type="strand" evidence="18">
    <location>
        <begin position="45"/>
        <end position="47"/>
    </location>
</feature>
<feature type="strand" evidence="18">
    <location>
        <begin position="50"/>
        <end position="52"/>
    </location>
</feature>
<feature type="helix" evidence="18">
    <location>
        <begin position="59"/>
        <end position="71"/>
    </location>
</feature>
<feature type="strand" evidence="18">
    <location>
        <begin position="73"/>
        <end position="86"/>
    </location>
</feature>
<feature type="turn" evidence="18">
    <location>
        <begin position="87"/>
        <end position="90"/>
    </location>
</feature>
<feature type="strand" evidence="18">
    <location>
        <begin position="91"/>
        <end position="103"/>
    </location>
</feature>
<feature type="helix" evidence="18">
    <location>
        <begin position="108"/>
        <end position="113"/>
    </location>
</feature>
<feature type="strand" evidence="18">
    <location>
        <begin position="117"/>
        <end position="121"/>
    </location>
</feature>
<feature type="helix" evidence="18">
    <location>
        <begin position="122"/>
        <end position="129"/>
    </location>
</feature>
<feature type="turn" evidence="18">
    <location>
        <begin position="130"/>
        <end position="132"/>
    </location>
</feature>
<feature type="helix" evidence="18">
    <location>
        <begin position="134"/>
        <end position="138"/>
    </location>
</feature>
<accession>O95989</accession>
<accession>B2R8N4</accession>
<organism>
    <name type="scientific">Homo sapiens</name>
    <name type="common">Human</name>
    <dbReference type="NCBI Taxonomy" id="9606"/>
    <lineage>
        <taxon>Eukaryota</taxon>
        <taxon>Metazoa</taxon>
        <taxon>Chordata</taxon>
        <taxon>Craniata</taxon>
        <taxon>Vertebrata</taxon>
        <taxon>Euteleostomi</taxon>
        <taxon>Mammalia</taxon>
        <taxon>Eutheria</taxon>
        <taxon>Euarchontoglires</taxon>
        <taxon>Primates</taxon>
        <taxon>Haplorrhini</taxon>
        <taxon>Catarrhini</taxon>
        <taxon>Hominidae</taxon>
        <taxon>Homo</taxon>
    </lineage>
</organism>
<evidence type="ECO:0000250" key="1">
    <source>
        <dbReference type="UniProtKB" id="Q566C7"/>
    </source>
</evidence>
<evidence type="ECO:0000250" key="2">
    <source>
        <dbReference type="UniProtKB" id="Q9JI46"/>
    </source>
</evidence>
<evidence type="ECO:0000255" key="3">
    <source>
        <dbReference type="PROSITE-ProRule" id="PRU00794"/>
    </source>
</evidence>
<evidence type="ECO:0000269" key="4">
    <source>
    </source>
</evidence>
<evidence type="ECO:0000269" key="5">
    <source>
    </source>
</evidence>
<evidence type="ECO:0000269" key="6">
    <source>
    </source>
</evidence>
<evidence type="ECO:0000269" key="7">
    <source>
    </source>
</evidence>
<evidence type="ECO:0000269" key="8">
    <source>
    </source>
</evidence>
<evidence type="ECO:0000269" key="9">
    <source>
    </source>
</evidence>
<evidence type="ECO:0000269" key="10">
    <source>
    </source>
</evidence>
<evidence type="ECO:0000269" key="11">
    <source>
    </source>
</evidence>
<evidence type="ECO:0000305" key="12"/>
<evidence type="ECO:0000305" key="13">
    <source>
    </source>
</evidence>
<evidence type="ECO:0000312" key="14">
    <source>
        <dbReference type="HGNC" id="HGNC:8050"/>
    </source>
</evidence>
<evidence type="ECO:0007744" key="15">
    <source>
        <dbReference type="PDB" id="2FVV"/>
    </source>
</evidence>
<evidence type="ECO:0007744" key="16">
    <source>
        <dbReference type="PDB" id="2Q9P"/>
    </source>
</evidence>
<evidence type="ECO:0007744" key="17">
    <source>
    </source>
</evidence>
<evidence type="ECO:0007829" key="18">
    <source>
        <dbReference type="PDB" id="6PCK"/>
    </source>
</evidence>
<proteinExistence type="evidence at protein level"/>